<sequence>MCLYVNKEHPYTQASGPWPACLPRRWQLYKDQRRLHRPGGRRPMSTSDSHLGSPRKRQLQRAAPAAPQHSEYQQQLSTLGMRIRQAVDNGYRAPQDPVRAAVPHAVPAAACVQDNTLYTVPDYKRVPLAADRAPPMLVNQRTVSSTSSLQAWESQLDERLSLIDSSIMHNKLGAGEFMLGGTKRAFDQLETDNW</sequence>
<reference key="1">
    <citation type="journal article" date="2004" name="Science">
        <title>The Ashbya gossypii genome as a tool for mapping the ancient Saccharomyces cerevisiae genome.</title>
        <authorList>
            <person name="Dietrich F.S."/>
            <person name="Voegeli S."/>
            <person name="Brachat S."/>
            <person name="Lerch A."/>
            <person name="Gates K."/>
            <person name="Steiner S."/>
            <person name="Mohr C."/>
            <person name="Poehlmann R."/>
            <person name="Luedi P."/>
            <person name="Choi S."/>
            <person name="Wing R.A."/>
            <person name="Flavier A."/>
            <person name="Gaffney T.D."/>
            <person name="Philippsen P."/>
        </authorList>
    </citation>
    <scope>NUCLEOTIDE SEQUENCE [LARGE SCALE GENOMIC DNA]</scope>
    <source>
        <strain>ATCC 10895 / CBS 109.51 / FGSC 9923 / NRRL Y-1056</strain>
    </source>
</reference>
<reference key="2">
    <citation type="journal article" date="2013" name="G3 (Bethesda)">
        <title>Genomes of Ashbya fungi isolated from insects reveal four mating-type loci, numerous translocations, lack of transposons, and distinct gene duplications.</title>
        <authorList>
            <person name="Dietrich F.S."/>
            <person name="Voegeli S."/>
            <person name="Kuo S."/>
            <person name="Philippsen P."/>
        </authorList>
    </citation>
    <scope>GENOME REANNOTATION</scope>
    <source>
        <strain>ATCC 10895 / CBS 109.51 / FGSC 9923 / NRRL Y-1056</strain>
    </source>
</reference>
<comment type="function">
    <text evidence="1">Mediates the nuclear localization of the ribonucleotide reductase.</text>
</comment>
<comment type="subcellular location">
    <subcellularLocation>
        <location evidence="1">Cytoplasm</location>
    </subcellularLocation>
    <subcellularLocation>
        <location evidence="1">Nucleus</location>
    </subcellularLocation>
</comment>
<comment type="similarity">
    <text evidence="3">Belongs to the DIF1/spd1 family.</text>
</comment>
<organism>
    <name type="scientific">Eremothecium gossypii (strain ATCC 10895 / CBS 109.51 / FGSC 9923 / NRRL Y-1056)</name>
    <name type="common">Yeast</name>
    <name type="synonym">Ashbya gossypii</name>
    <dbReference type="NCBI Taxonomy" id="284811"/>
    <lineage>
        <taxon>Eukaryota</taxon>
        <taxon>Fungi</taxon>
        <taxon>Dikarya</taxon>
        <taxon>Ascomycota</taxon>
        <taxon>Saccharomycotina</taxon>
        <taxon>Saccharomycetes</taxon>
        <taxon>Saccharomycetales</taxon>
        <taxon>Saccharomycetaceae</taxon>
        <taxon>Eremothecium</taxon>
    </lineage>
</organism>
<name>DIF1_EREGS</name>
<protein>
    <recommendedName>
        <fullName>Damage-regulated import facilitator 1</fullName>
    </recommendedName>
</protein>
<evidence type="ECO:0000250" key="1"/>
<evidence type="ECO:0000256" key="2">
    <source>
        <dbReference type="SAM" id="MobiDB-lite"/>
    </source>
</evidence>
<evidence type="ECO:0000305" key="3"/>
<feature type="chain" id="PRO_0000399010" description="Damage-regulated import facilitator 1">
    <location>
        <begin position="1"/>
        <end position="194"/>
    </location>
</feature>
<feature type="region of interest" description="Disordered" evidence="2">
    <location>
        <begin position="34"/>
        <end position="74"/>
    </location>
</feature>
<keyword id="KW-0963">Cytoplasm</keyword>
<keyword id="KW-0539">Nucleus</keyword>
<keyword id="KW-1185">Reference proteome</keyword>
<gene>
    <name type="primary">DIF1</name>
    <name type="ordered locus">AER122C</name>
</gene>
<dbReference type="EMBL" id="AE016818">
    <property type="protein sequence ID" value="AAS52805.1"/>
    <property type="molecule type" value="Genomic_DNA"/>
</dbReference>
<dbReference type="RefSeq" id="NP_984981.1">
    <property type="nucleotide sequence ID" value="NM_210335.1"/>
</dbReference>
<dbReference type="SMR" id="Q756Z2"/>
<dbReference type="STRING" id="284811.Q756Z2"/>
<dbReference type="EnsemblFungi" id="AAS52805">
    <property type="protein sequence ID" value="AAS52805"/>
    <property type="gene ID" value="AGOS_AER122C"/>
</dbReference>
<dbReference type="GeneID" id="4621187"/>
<dbReference type="KEGG" id="ago:AGOS_AER122C"/>
<dbReference type="eggNOG" id="ENOG502SG7B">
    <property type="taxonomic scope" value="Eukaryota"/>
</dbReference>
<dbReference type="HOGENOM" id="CLU_121023_0_0_1"/>
<dbReference type="InParanoid" id="Q756Z2"/>
<dbReference type="OrthoDB" id="4072855at2759"/>
<dbReference type="Proteomes" id="UP000000591">
    <property type="component" value="Chromosome V"/>
</dbReference>
<dbReference type="GO" id="GO:0005737">
    <property type="term" value="C:cytoplasm"/>
    <property type="evidence" value="ECO:0000318"/>
    <property type="project" value="GO_Central"/>
</dbReference>
<dbReference type="GO" id="GO:0005634">
    <property type="term" value="C:nucleus"/>
    <property type="evidence" value="ECO:0000318"/>
    <property type="project" value="GO_Central"/>
</dbReference>
<dbReference type="GO" id="GO:1990846">
    <property type="term" value="F:ribonucleoside-diphosphate reductase inhibitor activity"/>
    <property type="evidence" value="ECO:0000318"/>
    <property type="project" value="GO_Central"/>
</dbReference>
<dbReference type="GO" id="GO:0008104">
    <property type="term" value="P:protein localization"/>
    <property type="evidence" value="ECO:0000318"/>
    <property type="project" value="GO_Central"/>
</dbReference>
<dbReference type="InterPro" id="IPR013900">
    <property type="entry name" value="RNR_inhibitor"/>
</dbReference>
<dbReference type="PANTHER" id="PTHR28081:SF1">
    <property type="entry name" value="DAMAGE-REGULATED IMPORT FACILITATOR 1"/>
    <property type="match status" value="1"/>
</dbReference>
<dbReference type="PANTHER" id="PTHR28081">
    <property type="entry name" value="DAMAGE-REGULATED IMPORT FACILITATOR 1-RELATED"/>
    <property type="match status" value="1"/>
</dbReference>
<dbReference type="Pfam" id="PF08591">
    <property type="entry name" value="RNR_inhib"/>
    <property type="match status" value="1"/>
</dbReference>
<accession>Q756Z2</accession>
<proteinExistence type="inferred from homology"/>